<protein>
    <recommendedName>
        <fullName evidence="8">Small ribosomal subunit protein uS17m</fullName>
    </recommendedName>
    <alternativeName>
        <fullName>37S ribosomal protein S17, mitochondrial</fullName>
    </alternativeName>
</protein>
<proteinExistence type="evidence at protein level"/>
<sequence>MARQNFLGLVVSQGKMQKTVKVRVETKVFNKKINKELFHRRDYLVHDEGEISREGDLVRIEATRPLSKRKFFAIAEIIRNKGQQFALYESEAQLSVAKEEAQKAKEFLDKRSVRENKLNEKTTLLRDIRTIQDALSSGSTPKELLEIKQRYGIQDFSQETVRQLLQLDISGLEVNLEKQRSLIDRIQTRLSELLSNDLKCDQFLKDHGVEDPLTLKKNIKKNLLRKHVMMDMQQPSQ</sequence>
<feature type="chain" id="PRO_0000128525" description="Small ribosomal subunit protein uS17m">
    <location>
        <begin position="1"/>
        <end position="237"/>
    </location>
</feature>
<feature type="strand" evidence="12">
    <location>
        <begin position="5"/>
        <end position="16"/>
    </location>
</feature>
<feature type="strand" evidence="12">
    <location>
        <begin position="19"/>
        <end position="30"/>
    </location>
</feature>
<feature type="turn" evidence="12">
    <location>
        <begin position="31"/>
        <end position="34"/>
    </location>
</feature>
<feature type="strand" evidence="12">
    <location>
        <begin position="35"/>
        <end position="46"/>
    </location>
</feature>
<feature type="strand" evidence="12">
    <location>
        <begin position="57"/>
        <end position="62"/>
    </location>
</feature>
<feature type="strand" evidence="12">
    <location>
        <begin position="67"/>
        <end position="69"/>
    </location>
</feature>
<feature type="strand" evidence="12">
    <location>
        <begin position="72"/>
        <end position="79"/>
    </location>
</feature>
<feature type="helix" evidence="12">
    <location>
        <begin position="81"/>
        <end position="116"/>
    </location>
</feature>
<feature type="helix" evidence="12">
    <location>
        <begin position="125"/>
        <end position="133"/>
    </location>
</feature>
<feature type="helix" evidence="12">
    <location>
        <begin position="143"/>
        <end position="148"/>
    </location>
</feature>
<feature type="helix" evidence="12">
    <location>
        <begin position="161"/>
        <end position="164"/>
    </location>
</feature>
<feature type="helix" evidence="12">
    <location>
        <begin position="169"/>
        <end position="195"/>
    </location>
</feature>
<feature type="helix" evidence="12">
    <location>
        <begin position="197"/>
        <end position="206"/>
    </location>
</feature>
<feature type="helix" evidence="12">
    <location>
        <begin position="219"/>
        <end position="231"/>
    </location>
</feature>
<comment type="function">
    <text evidence="5 10 11">Component of the mitochondrial ribosome (mitoribosome), a dedicated translation machinery responsible for the synthesis of mitochondrial genome-encoded proteins, including at least some of the essential transmembrane subunits of the mitochondrial respiratory chain. The mitoribosomes are attached to the mitochondrial inner membrane and translation products are cotranslationally integrated into the membrane (PubMed:25609543, PubMed:28154081). uS17m may have a meiosis-specific role as it accumulates during the middle stage of sporulation (PubMed:15543521).</text>
</comment>
<comment type="subunit">
    <text evidence="1 7">Component of the mitochondrial small ribosomal subunit (mt-SSU). Mature yeast 74S mitochondrial ribosomes consist of a small (37S) and a large (54S) subunit. The 37S small subunit contains a 15S ribosomal RNA (15S mt-rRNA) and 34 different proteins. The 54S large subunit contains a 21S rRNA (21S mt-rRNA) and 46 different proteins.</text>
</comment>
<comment type="subcellular location">
    <subcellularLocation>
        <location evidence="2 4 5">Mitochondrion</location>
    </subcellularLocation>
    <text evidence="6">Mitoribosomes are tethered to the mitochondrial inner membrane and spatially aligned with the membrane insertion machinery through two distinct membrane contact sites, formed by the 21S rRNA expansion segment 96-ES1 and the inner membrane protein MBA1.</text>
</comment>
<comment type="miscellaneous">
    <text evidence="3">Present with 2810 molecules/cell in log phase SD medium.</text>
</comment>
<comment type="similarity">
    <text evidence="9">Belongs to the universal ribosomal protein uS17 family.</text>
</comment>
<dbReference type="EMBL" id="Z49808">
    <property type="protein sequence ID" value="CAA89921.1"/>
    <property type="molecule type" value="Genomic_DNA"/>
</dbReference>
<dbReference type="EMBL" id="U20641">
    <property type="protein sequence ID" value="AAB18932.1"/>
    <property type="molecule type" value="Genomic_DNA"/>
</dbReference>
<dbReference type="EMBL" id="BK006946">
    <property type="protein sequence ID" value="DAA10086.1"/>
    <property type="molecule type" value="Genomic_DNA"/>
</dbReference>
<dbReference type="PIR" id="S55135">
    <property type="entry name" value="S55135"/>
</dbReference>
<dbReference type="RefSeq" id="NP_013913.1">
    <property type="nucleotide sequence ID" value="NM_001182694.1"/>
</dbReference>
<dbReference type="PDB" id="5MRC">
    <property type="method" value="EM"/>
    <property type="resolution" value="3.25 A"/>
    <property type="chains" value="QQ=1-237"/>
</dbReference>
<dbReference type="PDB" id="5MRE">
    <property type="method" value="EM"/>
    <property type="resolution" value="3.75 A"/>
    <property type="chains" value="QQ=1-237"/>
</dbReference>
<dbReference type="PDB" id="5MRF">
    <property type="method" value="EM"/>
    <property type="resolution" value="4.97 A"/>
    <property type="chains" value="QQ=1-237"/>
</dbReference>
<dbReference type="PDB" id="8D8J">
    <property type="method" value="EM"/>
    <property type="resolution" value="3.80 A"/>
    <property type="chains" value="Q=1-237"/>
</dbReference>
<dbReference type="PDB" id="8D8K">
    <property type="method" value="EM"/>
    <property type="resolution" value="3.13 A"/>
    <property type="chains" value="Q=1-237"/>
</dbReference>
<dbReference type="PDB" id="8D8L">
    <property type="method" value="EM"/>
    <property type="resolution" value="2.60 A"/>
    <property type="chains" value="Q=1-237"/>
</dbReference>
<dbReference type="PDB" id="8OM2">
    <property type="method" value="EM"/>
    <property type="resolution" value="2.57 A"/>
    <property type="chains" value="Q=1-237"/>
</dbReference>
<dbReference type="PDB" id="8OM3">
    <property type="method" value="EM"/>
    <property type="resolution" value="2.87 A"/>
    <property type="chains" value="Q=1-237"/>
</dbReference>
<dbReference type="PDB" id="8OM4">
    <property type="method" value="EM"/>
    <property type="resolution" value="2.32 A"/>
    <property type="chains" value="Q=1-237"/>
</dbReference>
<dbReference type="PDBsum" id="5MRC"/>
<dbReference type="PDBsum" id="5MRE"/>
<dbReference type="PDBsum" id="5MRF"/>
<dbReference type="PDBsum" id="8D8J"/>
<dbReference type="PDBsum" id="8D8K"/>
<dbReference type="PDBsum" id="8D8L"/>
<dbReference type="PDBsum" id="8OM2"/>
<dbReference type="PDBsum" id="8OM3"/>
<dbReference type="PDBsum" id="8OM4"/>
<dbReference type="EMDB" id="EMD-16966"/>
<dbReference type="EMDB" id="EMD-16967"/>
<dbReference type="EMDB" id="EMD-16968"/>
<dbReference type="EMDB" id="EMD-27249"/>
<dbReference type="EMDB" id="EMD-27250"/>
<dbReference type="EMDB" id="EMD-27251"/>
<dbReference type="EMDB" id="EMD-3551"/>
<dbReference type="EMDB" id="EMD-3552"/>
<dbReference type="EMDB" id="EMD-3553"/>
<dbReference type="SMR" id="Q03246"/>
<dbReference type="BioGRID" id="35366">
    <property type="interactions" value="107"/>
</dbReference>
<dbReference type="ComplexPortal" id="CPX-1603">
    <property type="entry name" value="37S mitochondrial small ribosomal subunit"/>
</dbReference>
<dbReference type="DIP" id="DIP-6688N"/>
<dbReference type="FunCoup" id="Q03246">
    <property type="interactions" value="335"/>
</dbReference>
<dbReference type="IntAct" id="Q03246">
    <property type="interactions" value="42"/>
</dbReference>
<dbReference type="MINT" id="Q03246"/>
<dbReference type="STRING" id="4932.YMR188C"/>
<dbReference type="PaxDb" id="4932-YMR188C"/>
<dbReference type="PeptideAtlas" id="Q03246"/>
<dbReference type="EnsemblFungi" id="YMR188C_mRNA">
    <property type="protein sequence ID" value="YMR188C"/>
    <property type="gene ID" value="YMR188C"/>
</dbReference>
<dbReference type="GeneID" id="855226"/>
<dbReference type="KEGG" id="sce:YMR188C"/>
<dbReference type="AGR" id="SGD:S000004800"/>
<dbReference type="SGD" id="S000004800">
    <property type="gene designation" value="MRPS17"/>
</dbReference>
<dbReference type="VEuPathDB" id="FungiDB:YMR188C"/>
<dbReference type="eggNOG" id="KOG1740">
    <property type="taxonomic scope" value="Eukaryota"/>
</dbReference>
<dbReference type="HOGENOM" id="CLU_1246209_0_0_1"/>
<dbReference type="InParanoid" id="Q03246"/>
<dbReference type="OMA" id="IRNKGQQ"/>
<dbReference type="OrthoDB" id="274752at2759"/>
<dbReference type="BioCyc" id="YEAST:G3O-32876-MONOMER"/>
<dbReference type="BioGRID-ORCS" id="855226">
    <property type="hits" value="0 hits in 10 CRISPR screens"/>
</dbReference>
<dbReference type="PRO" id="PR:Q03246"/>
<dbReference type="Proteomes" id="UP000002311">
    <property type="component" value="Chromosome XIII"/>
</dbReference>
<dbReference type="RNAct" id="Q03246">
    <property type="molecule type" value="protein"/>
</dbReference>
<dbReference type="GO" id="GO:0005743">
    <property type="term" value="C:mitochondrial inner membrane"/>
    <property type="evidence" value="ECO:0000303"/>
    <property type="project" value="ComplexPortal"/>
</dbReference>
<dbReference type="GO" id="GO:0005763">
    <property type="term" value="C:mitochondrial small ribosomal subunit"/>
    <property type="evidence" value="ECO:0000314"/>
    <property type="project" value="SGD"/>
</dbReference>
<dbReference type="GO" id="GO:0005739">
    <property type="term" value="C:mitochondrion"/>
    <property type="evidence" value="ECO:0007005"/>
    <property type="project" value="SGD"/>
</dbReference>
<dbReference type="GO" id="GO:0019843">
    <property type="term" value="F:rRNA binding"/>
    <property type="evidence" value="ECO:0007669"/>
    <property type="project" value="UniProtKB-KW"/>
</dbReference>
<dbReference type="GO" id="GO:0003735">
    <property type="term" value="F:structural constituent of ribosome"/>
    <property type="evidence" value="ECO:0000314"/>
    <property type="project" value="SGD"/>
</dbReference>
<dbReference type="GO" id="GO:0032543">
    <property type="term" value="P:mitochondrial translation"/>
    <property type="evidence" value="ECO:0000303"/>
    <property type="project" value="ComplexPortal"/>
</dbReference>
<dbReference type="GO" id="GO:0030435">
    <property type="term" value="P:sporulation resulting in formation of a cellular spore"/>
    <property type="evidence" value="ECO:0007669"/>
    <property type="project" value="UniProtKB-KW"/>
</dbReference>
<dbReference type="CDD" id="cd00364">
    <property type="entry name" value="Ribosomal_uS17"/>
    <property type="match status" value="1"/>
</dbReference>
<dbReference type="FunFam" id="2.40.50.140:FF:000353">
    <property type="entry name" value="Mitochondrial ribosomal protein"/>
    <property type="match status" value="1"/>
</dbReference>
<dbReference type="Gene3D" id="2.40.50.140">
    <property type="entry name" value="Nucleic acid-binding proteins"/>
    <property type="match status" value="1"/>
</dbReference>
<dbReference type="InterPro" id="IPR012340">
    <property type="entry name" value="NA-bd_OB-fold"/>
</dbReference>
<dbReference type="InterPro" id="IPR000266">
    <property type="entry name" value="Ribosomal_uS17"/>
</dbReference>
<dbReference type="PANTHER" id="PTHR10744">
    <property type="entry name" value="40S RIBOSOMAL PROTEIN S11 FAMILY MEMBER"/>
    <property type="match status" value="1"/>
</dbReference>
<dbReference type="PANTHER" id="PTHR10744:SF1">
    <property type="entry name" value="SMALL RIBOSOMAL SUBUNIT PROTEIN US17M"/>
    <property type="match status" value="1"/>
</dbReference>
<dbReference type="Pfam" id="PF00366">
    <property type="entry name" value="Ribosomal_S17"/>
    <property type="match status" value="1"/>
</dbReference>
<dbReference type="SUPFAM" id="SSF50249">
    <property type="entry name" value="Nucleic acid-binding proteins"/>
    <property type="match status" value="1"/>
</dbReference>
<organism>
    <name type="scientific">Saccharomyces cerevisiae (strain ATCC 204508 / S288c)</name>
    <name type="common">Baker's yeast</name>
    <dbReference type="NCBI Taxonomy" id="559292"/>
    <lineage>
        <taxon>Eukaryota</taxon>
        <taxon>Fungi</taxon>
        <taxon>Dikarya</taxon>
        <taxon>Ascomycota</taxon>
        <taxon>Saccharomycotina</taxon>
        <taxon>Saccharomycetes</taxon>
        <taxon>Saccharomycetales</taxon>
        <taxon>Saccharomycetaceae</taxon>
        <taxon>Saccharomyces</taxon>
    </lineage>
</organism>
<name>RT17_YEAST</name>
<keyword id="KW-0002">3D-structure</keyword>
<keyword id="KW-0496">Mitochondrion</keyword>
<keyword id="KW-1185">Reference proteome</keyword>
<keyword id="KW-0687">Ribonucleoprotein</keyword>
<keyword id="KW-0689">Ribosomal protein</keyword>
<keyword id="KW-0694">RNA-binding</keyword>
<keyword id="KW-0699">rRNA-binding</keyword>
<keyword id="KW-0749">Sporulation</keyword>
<gene>
    <name type="primary">MRPS17</name>
    <name type="ordered locus">YMR188C</name>
    <name type="ORF">YM8010.18C</name>
</gene>
<accession>Q03246</accession>
<accession>D6W012</accession>
<accession>Q02523</accession>
<reference key="1">
    <citation type="journal article" date="1997" name="Nature">
        <title>The nucleotide sequence of Saccharomyces cerevisiae chromosome XIII.</title>
        <authorList>
            <person name="Bowman S."/>
            <person name="Churcher C.M."/>
            <person name="Badcock K."/>
            <person name="Brown D."/>
            <person name="Chillingworth T."/>
            <person name="Connor R."/>
            <person name="Dedman K."/>
            <person name="Devlin K."/>
            <person name="Gentles S."/>
            <person name="Hamlin N."/>
            <person name="Hunt S."/>
            <person name="Jagels K."/>
            <person name="Lye G."/>
            <person name="Moule S."/>
            <person name="Odell C."/>
            <person name="Pearson D."/>
            <person name="Rajandream M.A."/>
            <person name="Rice P."/>
            <person name="Skelton J."/>
            <person name="Walsh S.V."/>
            <person name="Whitehead S."/>
            <person name="Barrell B.G."/>
        </authorList>
    </citation>
    <scope>NUCLEOTIDE SEQUENCE [LARGE SCALE GENOMIC DNA]</scope>
    <source>
        <strain>ATCC 204508 / S288c</strain>
    </source>
</reference>
<reference key="2">
    <citation type="journal article" date="2014" name="G3 (Bethesda)">
        <title>The reference genome sequence of Saccharomyces cerevisiae: Then and now.</title>
        <authorList>
            <person name="Engel S.R."/>
            <person name="Dietrich F.S."/>
            <person name="Fisk D.G."/>
            <person name="Binkley G."/>
            <person name="Balakrishnan R."/>
            <person name="Costanzo M.C."/>
            <person name="Dwight S.S."/>
            <person name="Hitz B.C."/>
            <person name="Karra K."/>
            <person name="Nash R.S."/>
            <person name="Weng S."/>
            <person name="Wong E.D."/>
            <person name="Lloyd P."/>
            <person name="Skrzypek M.S."/>
            <person name="Miyasato S.R."/>
            <person name="Simison M."/>
            <person name="Cherry J.M."/>
        </authorList>
    </citation>
    <scope>GENOME REANNOTATION</scope>
    <source>
        <strain>ATCC 204508 / S288c</strain>
    </source>
</reference>
<reference key="3">
    <citation type="journal article" date="1995" name="Genetics">
        <title>Genetics of the synthesis of serine from glycine and the utilization of glycine as sole nitrogen source by Saccharomyces cerevisiae.</title>
        <authorList>
            <person name="Sinclair D.A."/>
            <person name="Dawes I.W."/>
        </authorList>
    </citation>
    <scope>NUCLEOTIDE SEQUENCE [GENOMIC DNA] OF 1-47</scope>
</reference>
<reference key="4">
    <citation type="journal article" date="2002" name="Eur. J. Biochem.">
        <title>Tag-mediated isolation of yeast mitochondrial ribosome and mass spectrometric identification of its new components.</title>
        <authorList>
            <person name="Gan X."/>
            <person name="Kitakawa M."/>
            <person name="Yoshino K."/>
            <person name="Oshiro N."/>
            <person name="Yonezawa K."/>
            <person name="Isono K."/>
        </authorList>
    </citation>
    <scope>IDENTIFICATION IN THE MITOCHONDRIAL RIBOSOMAL SMALL COMPLEX</scope>
    <scope>IDENTIFICATION BY MASS SPECTROMETRY</scope>
</reference>
<reference key="5">
    <citation type="journal article" date="2003" name="Nature">
        <title>Global analysis of protein localization in budding yeast.</title>
        <authorList>
            <person name="Huh W.-K."/>
            <person name="Falvo J.V."/>
            <person name="Gerke L.C."/>
            <person name="Carroll A.S."/>
            <person name="Howson R.W."/>
            <person name="Weissman J.S."/>
            <person name="O'Shea E.K."/>
        </authorList>
    </citation>
    <scope>SUBCELLULAR LOCATION [LARGE SCALE ANALYSIS]</scope>
</reference>
<reference key="6">
    <citation type="journal article" date="2003" name="Nature">
        <title>Global analysis of protein expression in yeast.</title>
        <authorList>
            <person name="Ghaemmaghami S."/>
            <person name="Huh W.-K."/>
            <person name="Bower K."/>
            <person name="Howson R.W."/>
            <person name="Belle A."/>
            <person name="Dephoure N."/>
            <person name="O'Shea E.K."/>
            <person name="Weissman J.S."/>
        </authorList>
    </citation>
    <scope>LEVEL OF PROTEIN EXPRESSION [LARGE SCALE ANALYSIS]</scope>
</reference>
<reference key="7">
    <citation type="journal article" date="2003" name="Proc. Natl. Acad. Sci. U.S.A.">
        <title>The proteome of Saccharomyces cerevisiae mitochondria.</title>
        <authorList>
            <person name="Sickmann A."/>
            <person name="Reinders J."/>
            <person name="Wagner Y."/>
            <person name="Joppich C."/>
            <person name="Zahedi R.P."/>
            <person name="Meyer H.E."/>
            <person name="Schoenfisch B."/>
            <person name="Perschil I."/>
            <person name="Chacinska A."/>
            <person name="Guiard B."/>
            <person name="Rehling P."/>
            <person name="Pfanner N."/>
            <person name="Meisinger C."/>
        </authorList>
    </citation>
    <scope>SUBCELLULAR LOCATION [LARGE SCALE ANALYSIS]</scope>
    <source>
        <strain>ATCC 76625 / YPH499</strain>
    </source>
</reference>
<reference key="8">
    <citation type="journal article" date="2004" name="Yeast">
        <title>Analysis of the meiotic role of the mitochondrial ribosomal proteins Mrps17 and Mrpl37 in Saccharomyces cerevisiae.</title>
        <authorList>
            <person name="Hanlon S.E."/>
            <person name="Xu Z."/>
            <person name="Norris D.N."/>
            <person name="Vershon A.K."/>
        </authorList>
    </citation>
    <scope>FUNCTION</scope>
    <scope>SUBCELLULAR LOCATION</scope>
</reference>
<reference key="9">
    <citation type="journal article" date="2015" name="Nat. Commun.">
        <title>Organization of the mitochondrial translation machinery studied in situ by cryoelectron tomography.</title>
        <authorList>
            <person name="Pfeffer S."/>
            <person name="Woellhaf M.W."/>
            <person name="Herrmann J.M."/>
            <person name="Forster F."/>
        </authorList>
    </citation>
    <scope>SUBCELLULAR LOCATION</scope>
</reference>
<reference key="10">
    <citation type="journal article" date="2017" name="Science">
        <title>The structure of the yeast mitochondrial ribosome.</title>
        <authorList>
            <person name="Desai N."/>
            <person name="Brown A."/>
            <person name="Amunts A."/>
            <person name="Ramakrishnan V."/>
        </authorList>
    </citation>
    <scope>STRUCTURE BY ELECTRON MICROSCOPY (3.25 ANGSTROMS)</scope>
    <scope>SUBUNIT</scope>
</reference>
<evidence type="ECO:0000269" key="1">
    <source>
    </source>
</evidence>
<evidence type="ECO:0000269" key="2">
    <source>
    </source>
</evidence>
<evidence type="ECO:0000269" key="3">
    <source>
    </source>
</evidence>
<evidence type="ECO:0000269" key="4">
    <source>
    </source>
</evidence>
<evidence type="ECO:0000269" key="5">
    <source>
    </source>
</evidence>
<evidence type="ECO:0000269" key="6">
    <source>
    </source>
</evidence>
<evidence type="ECO:0000269" key="7">
    <source>
    </source>
</evidence>
<evidence type="ECO:0000303" key="8">
    <source>
    </source>
</evidence>
<evidence type="ECO:0000305" key="9"/>
<evidence type="ECO:0000305" key="10">
    <source>
    </source>
</evidence>
<evidence type="ECO:0000305" key="11">
    <source>
    </source>
</evidence>
<evidence type="ECO:0007829" key="12">
    <source>
        <dbReference type="PDB" id="8D8L"/>
    </source>
</evidence>